<comment type="function">
    <text evidence="1">Transfers and isomerizes the ribose moiety from AdoMet to the 7-aminomethyl group of 7-deazaguanine (preQ1-tRNA) to give epoxyqueuosine (oQ-tRNA).</text>
</comment>
<comment type="catalytic activity">
    <reaction evidence="1">
        <text>7-aminomethyl-7-carbaguanosine(34) in tRNA + S-adenosyl-L-methionine = epoxyqueuosine(34) in tRNA + adenine + L-methionine + 2 H(+)</text>
        <dbReference type="Rhea" id="RHEA:32155"/>
        <dbReference type="Rhea" id="RHEA-COMP:10342"/>
        <dbReference type="Rhea" id="RHEA-COMP:18582"/>
        <dbReference type="ChEBI" id="CHEBI:15378"/>
        <dbReference type="ChEBI" id="CHEBI:16708"/>
        <dbReference type="ChEBI" id="CHEBI:57844"/>
        <dbReference type="ChEBI" id="CHEBI:59789"/>
        <dbReference type="ChEBI" id="CHEBI:82833"/>
        <dbReference type="ChEBI" id="CHEBI:194443"/>
        <dbReference type="EC" id="2.4.99.17"/>
    </reaction>
</comment>
<comment type="pathway">
    <text evidence="1">tRNA modification; tRNA-queuosine biosynthesis.</text>
</comment>
<comment type="subunit">
    <text evidence="1">Monomer.</text>
</comment>
<comment type="subcellular location">
    <subcellularLocation>
        <location evidence="1">Cytoplasm</location>
    </subcellularLocation>
</comment>
<comment type="similarity">
    <text evidence="1">Belongs to the QueA family.</text>
</comment>
<organism>
    <name type="scientific">Escherichia coli (strain SE11)</name>
    <dbReference type="NCBI Taxonomy" id="409438"/>
    <lineage>
        <taxon>Bacteria</taxon>
        <taxon>Pseudomonadati</taxon>
        <taxon>Pseudomonadota</taxon>
        <taxon>Gammaproteobacteria</taxon>
        <taxon>Enterobacterales</taxon>
        <taxon>Enterobacteriaceae</taxon>
        <taxon>Escherichia</taxon>
    </lineage>
</organism>
<sequence>MRVTDFSFELPESLIAHYPMPERSSCRLLSLDGPTGALTHGTFTDLLDKLNPGDLLVFNNTRVIPARLFGRKASGGKIEVLVERMLDDKRILAHIRASKAPKPGAELLLGDDESINATMTARHGALFEVEFNDERSVLDILNSIGHMPLPPYIDRPDEDADRELYQTVYSEKPGAVAAPTAGLHFDEPLLEKLRAKGVEMAFVTLHVGAGTFQPVRVDTIEDHIMHSEYAEVPQDVVDAVLAAKARGNRVIAVGTTSVRSLESAAQAAKNDLIEPFFDDTQIFIYPGFQYKVVDALVTNFHLPESTLIMLVSAFAGYQHTMNAYKAAVEEKYRFFSYGDAMFITYNPQAINERVGE</sequence>
<feature type="chain" id="PRO_1000094774" description="S-adenosylmethionine:tRNA ribosyltransferase-isomerase">
    <location>
        <begin position="1"/>
        <end position="356"/>
    </location>
</feature>
<evidence type="ECO:0000255" key="1">
    <source>
        <dbReference type="HAMAP-Rule" id="MF_00113"/>
    </source>
</evidence>
<name>QUEA_ECOSE</name>
<proteinExistence type="inferred from homology"/>
<gene>
    <name evidence="1" type="primary">queA</name>
    <name type="ordered locus">ECSE_0426</name>
</gene>
<keyword id="KW-0963">Cytoplasm</keyword>
<keyword id="KW-0671">Queuosine biosynthesis</keyword>
<keyword id="KW-0949">S-adenosyl-L-methionine</keyword>
<keyword id="KW-0808">Transferase</keyword>
<accession>B6HZK5</accession>
<dbReference type="EC" id="2.4.99.17" evidence="1"/>
<dbReference type="EMBL" id="AP009240">
    <property type="protein sequence ID" value="BAG75950.1"/>
    <property type="molecule type" value="Genomic_DNA"/>
</dbReference>
<dbReference type="RefSeq" id="WP_001266503.1">
    <property type="nucleotide sequence ID" value="NC_011415.1"/>
</dbReference>
<dbReference type="SMR" id="B6HZK5"/>
<dbReference type="GeneID" id="93777055"/>
<dbReference type="KEGG" id="ecy:ECSE_0426"/>
<dbReference type="HOGENOM" id="CLU_039110_1_0_6"/>
<dbReference type="UniPathway" id="UPA00392"/>
<dbReference type="Proteomes" id="UP000008199">
    <property type="component" value="Chromosome"/>
</dbReference>
<dbReference type="GO" id="GO:0005737">
    <property type="term" value="C:cytoplasm"/>
    <property type="evidence" value="ECO:0007669"/>
    <property type="project" value="UniProtKB-SubCell"/>
</dbReference>
<dbReference type="GO" id="GO:0051075">
    <property type="term" value="F:S-adenosylmethionine:tRNA ribosyltransferase-isomerase activity"/>
    <property type="evidence" value="ECO:0007669"/>
    <property type="project" value="UniProtKB-EC"/>
</dbReference>
<dbReference type="GO" id="GO:0008616">
    <property type="term" value="P:queuosine biosynthetic process"/>
    <property type="evidence" value="ECO:0007669"/>
    <property type="project" value="UniProtKB-UniRule"/>
</dbReference>
<dbReference type="GO" id="GO:0002099">
    <property type="term" value="P:tRNA wobble guanine modification"/>
    <property type="evidence" value="ECO:0007669"/>
    <property type="project" value="TreeGrafter"/>
</dbReference>
<dbReference type="FunFam" id="2.40.10.240:FF:000001">
    <property type="entry name" value="S-adenosylmethionine:tRNA ribosyltransferase-isomerase"/>
    <property type="match status" value="1"/>
</dbReference>
<dbReference type="FunFam" id="3.40.1780.10:FF:000001">
    <property type="entry name" value="S-adenosylmethionine:tRNA ribosyltransferase-isomerase"/>
    <property type="match status" value="1"/>
</dbReference>
<dbReference type="Gene3D" id="2.40.10.240">
    <property type="entry name" value="QueA-like"/>
    <property type="match status" value="1"/>
</dbReference>
<dbReference type="Gene3D" id="3.40.1780.10">
    <property type="entry name" value="QueA-like"/>
    <property type="match status" value="1"/>
</dbReference>
<dbReference type="HAMAP" id="MF_00113">
    <property type="entry name" value="QueA"/>
    <property type="match status" value="1"/>
</dbReference>
<dbReference type="InterPro" id="IPR003699">
    <property type="entry name" value="QueA"/>
</dbReference>
<dbReference type="InterPro" id="IPR042118">
    <property type="entry name" value="QueA_dom1"/>
</dbReference>
<dbReference type="InterPro" id="IPR042119">
    <property type="entry name" value="QueA_dom2"/>
</dbReference>
<dbReference type="InterPro" id="IPR036100">
    <property type="entry name" value="QueA_sf"/>
</dbReference>
<dbReference type="NCBIfam" id="NF001140">
    <property type="entry name" value="PRK00147.1"/>
    <property type="match status" value="1"/>
</dbReference>
<dbReference type="NCBIfam" id="TIGR00113">
    <property type="entry name" value="queA"/>
    <property type="match status" value="1"/>
</dbReference>
<dbReference type="PANTHER" id="PTHR30307">
    <property type="entry name" value="S-ADENOSYLMETHIONINE:TRNA RIBOSYLTRANSFERASE-ISOMERASE"/>
    <property type="match status" value="1"/>
</dbReference>
<dbReference type="PANTHER" id="PTHR30307:SF0">
    <property type="entry name" value="S-ADENOSYLMETHIONINE:TRNA RIBOSYLTRANSFERASE-ISOMERASE"/>
    <property type="match status" value="1"/>
</dbReference>
<dbReference type="Pfam" id="PF02547">
    <property type="entry name" value="Queuosine_synth"/>
    <property type="match status" value="1"/>
</dbReference>
<dbReference type="SUPFAM" id="SSF111337">
    <property type="entry name" value="QueA-like"/>
    <property type="match status" value="1"/>
</dbReference>
<reference key="1">
    <citation type="journal article" date="2008" name="DNA Res.">
        <title>Complete genome sequence and comparative analysis of the wild-type commensal Escherichia coli strain SE11 isolated from a healthy adult.</title>
        <authorList>
            <person name="Oshima K."/>
            <person name="Toh H."/>
            <person name="Ogura Y."/>
            <person name="Sasamoto H."/>
            <person name="Morita H."/>
            <person name="Park S.-H."/>
            <person name="Ooka T."/>
            <person name="Iyoda S."/>
            <person name="Taylor T.D."/>
            <person name="Hayashi T."/>
            <person name="Itoh K."/>
            <person name="Hattori M."/>
        </authorList>
    </citation>
    <scope>NUCLEOTIDE SEQUENCE [LARGE SCALE GENOMIC DNA]</scope>
    <source>
        <strain>SE11</strain>
    </source>
</reference>
<protein>
    <recommendedName>
        <fullName evidence="1">S-adenosylmethionine:tRNA ribosyltransferase-isomerase</fullName>
        <ecNumber evidence="1">2.4.99.17</ecNumber>
    </recommendedName>
    <alternativeName>
        <fullName evidence="1">Queuosine biosynthesis protein QueA</fullName>
    </alternativeName>
</protein>